<feature type="chain" id="PRO_1000044990" description="1,4-alpha-glucan branching enzyme GlgB">
    <location>
        <begin position="1"/>
        <end position="756"/>
    </location>
</feature>
<feature type="active site" description="Nucleophile" evidence="1">
    <location>
        <position position="431"/>
    </location>
</feature>
<feature type="active site" description="Proton donor" evidence="1">
    <location>
        <position position="484"/>
    </location>
</feature>
<dbReference type="EC" id="2.4.1.18" evidence="1"/>
<dbReference type="EMBL" id="CP000554">
    <property type="protein sequence ID" value="ABM78579.1"/>
    <property type="molecule type" value="Genomic_DNA"/>
</dbReference>
<dbReference type="RefSeq" id="WP_011826464.1">
    <property type="nucleotide sequence ID" value="NC_008820.1"/>
</dbReference>
<dbReference type="SMR" id="A2CAR9"/>
<dbReference type="STRING" id="59922.P9303_18371"/>
<dbReference type="CAZy" id="CBM48">
    <property type="family name" value="Carbohydrate-Binding Module Family 48"/>
</dbReference>
<dbReference type="CAZy" id="GH13">
    <property type="family name" value="Glycoside Hydrolase Family 13"/>
</dbReference>
<dbReference type="KEGG" id="pmf:P9303_18371"/>
<dbReference type="HOGENOM" id="CLU_004245_3_2_3"/>
<dbReference type="BioCyc" id="PMAR59922:G1G80-1592-MONOMER"/>
<dbReference type="UniPathway" id="UPA00164"/>
<dbReference type="Proteomes" id="UP000002274">
    <property type="component" value="Chromosome"/>
</dbReference>
<dbReference type="GO" id="GO:0005829">
    <property type="term" value="C:cytosol"/>
    <property type="evidence" value="ECO:0007669"/>
    <property type="project" value="TreeGrafter"/>
</dbReference>
<dbReference type="GO" id="GO:0003844">
    <property type="term" value="F:1,4-alpha-glucan branching enzyme activity"/>
    <property type="evidence" value="ECO:0007669"/>
    <property type="project" value="UniProtKB-UniRule"/>
</dbReference>
<dbReference type="GO" id="GO:0043169">
    <property type="term" value="F:cation binding"/>
    <property type="evidence" value="ECO:0007669"/>
    <property type="project" value="InterPro"/>
</dbReference>
<dbReference type="GO" id="GO:0004553">
    <property type="term" value="F:hydrolase activity, hydrolyzing O-glycosyl compounds"/>
    <property type="evidence" value="ECO:0007669"/>
    <property type="project" value="InterPro"/>
</dbReference>
<dbReference type="GO" id="GO:0005978">
    <property type="term" value="P:glycogen biosynthetic process"/>
    <property type="evidence" value="ECO:0007669"/>
    <property type="project" value="UniProtKB-UniRule"/>
</dbReference>
<dbReference type="CDD" id="cd11322">
    <property type="entry name" value="AmyAc_Glg_BE"/>
    <property type="match status" value="1"/>
</dbReference>
<dbReference type="CDD" id="cd02855">
    <property type="entry name" value="E_set_GBE_prok_N"/>
    <property type="match status" value="1"/>
</dbReference>
<dbReference type="FunFam" id="2.60.40.10:FF:000169">
    <property type="entry name" value="1,4-alpha-glucan branching enzyme GlgB"/>
    <property type="match status" value="1"/>
</dbReference>
<dbReference type="FunFam" id="2.60.40.1180:FF:000002">
    <property type="entry name" value="1,4-alpha-glucan branching enzyme GlgB"/>
    <property type="match status" value="1"/>
</dbReference>
<dbReference type="FunFam" id="3.20.20.80:FF:000003">
    <property type="entry name" value="1,4-alpha-glucan branching enzyme GlgB"/>
    <property type="match status" value="1"/>
</dbReference>
<dbReference type="Gene3D" id="3.20.20.80">
    <property type="entry name" value="Glycosidases"/>
    <property type="match status" value="1"/>
</dbReference>
<dbReference type="Gene3D" id="2.60.40.1180">
    <property type="entry name" value="Golgi alpha-mannosidase II"/>
    <property type="match status" value="1"/>
</dbReference>
<dbReference type="Gene3D" id="2.60.40.10">
    <property type="entry name" value="Immunoglobulins"/>
    <property type="match status" value="2"/>
</dbReference>
<dbReference type="HAMAP" id="MF_00685">
    <property type="entry name" value="GlgB"/>
    <property type="match status" value="1"/>
</dbReference>
<dbReference type="InterPro" id="IPR006048">
    <property type="entry name" value="A-amylase/branching_C"/>
</dbReference>
<dbReference type="InterPro" id="IPR037439">
    <property type="entry name" value="Branching_enzy"/>
</dbReference>
<dbReference type="InterPro" id="IPR006407">
    <property type="entry name" value="GlgB"/>
</dbReference>
<dbReference type="InterPro" id="IPR054169">
    <property type="entry name" value="GlgB_N"/>
</dbReference>
<dbReference type="InterPro" id="IPR044143">
    <property type="entry name" value="GlgB_N_E_set_prok"/>
</dbReference>
<dbReference type="InterPro" id="IPR006047">
    <property type="entry name" value="Glyco_hydro_13_cat_dom"/>
</dbReference>
<dbReference type="InterPro" id="IPR004193">
    <property type="entry name" value="Glyco_hydro_13_N"/>
</dbReference>
<dbReference type="InterPro" id="IPR013780">
    <property type="entry name" value="Glyco_hydro_b"/>
</dbReference>
<dbReference type="InterPro" id="IPR017853">
    <property type="entry name" value="Glycoside_hydrolase_SF"/>
</dbReference>
<dbReference type="InterPro" id="IPR013783">
    <property type="entry name" value="Ig-like_fold"/>
</dbReference>
<dbReference type="InterPro" id="IPR014756">
    <property type="entry name" value="Ig_E-set"/>
</dbReference>
<dbReference type="NCBIfam" id="TIGR01515">
    <property type="entry name" value="branching_enzym"/>
    <property type="match status" value="1"/>
</dbReference>
<dbReference type="NCBIfam" id="NF003811">
    <property type="entry name" value="PRK05402.1"/>
    <property type="match status" value="1"/>
</dbReference>
<dbReference type="NCBIfam" id="NF008967">
    <property type="entry name" value="PRK12313.1"/>
    <property type="match status" value="1"/>
</dbReference>
<dbReference type="PANTHER" id="PTHR43651">
    <property type="entry name" value="1,4-ALPHA-GLUCAN-BRANCHING ENZYME"/>
    <property type="match status" value="1"/>
</dbReference>
<dbReference type="PANTHER" id="PTHR43651:SF3">
    <property type="entry name" value="1,4-ALPHA-GLUCAN-BRANCHING ENZYME"/>
    <property type="match status" value="1"/>
</dbReference>
<dbReference type="Pfam" id="PF00128">
    <property type="entry name" value="Alpha-amylase"/>
    <property type="match status" value="2"/>
</dbReference>
<dbReference type="Pfam" id="PF02806">
    <property type="entry name" value="Alpha-amylase_C"/>
    <property type="match status" value="1"/>
</dbReference>
<dbReference type="Pfam" id="PF02922">
    <property type="entry name" value="CBM_48"/>
    <property type="match status" value="1"/>
</dbReference>
<dbReference type="Pfam" id="PF22019">
    <property type="entry name" value="GlgB_N"/>
    <property type="match status" value="1"/>
</dbReference>
<dbReference type="PIRSF" id="PIRSF000463">
    <property type="entry name" value="GlgB"/>
    <property type="match status" value="1"/>
</dbReference>
<dbReference type="SMART" id="SM00642">
    <property type="entry name" value="Aamy"/>
    <property type="match status" value="1"/>
</dbReference>
<dbReference type="SUPFAM" id="SSF51445">
    <property type="entry name" value="(Trans)glycosidases"/>
    <property type="match status" value="1"/>
</dbReference>
<dbReference type="SUPFAM" id="SSF81296">
    <property type="entry name" value="E set domains"/>
    <property type="match status" value="2"/>
</dbReference>
<dbReference type="SUPFAM" id="SSF51011">
    <property type="entry name" value="Glycosyl hydrolase domain"/>
    <property type="match status" value="1"/>
</dbReference>
<protein>
    <recommendedName>
        <fullName evidence="1">1,4-alpha-glucan branching enzyme GlgB</fullName>
        <ecNumber evidence="1">2.4.1.18</ecNumber>
    </recommendedName>
    <alternativeName>
        <fullName evidence="1">1,4-alpha-D-glucan:1,4-alpha-D-glucan 6-glucosyl-transferase</fullName>
    </alternativeName>
    <alternativeName>
        <fullName evidence="1">Alpha-(1-&gt;4)-glucan branching enzyme</fullName>
    </alternativeName>
    <alternativeName>
        <fullName evidence="1">Glycogen branching enzyme</fullName>
        <shortName evidence="1">BE</shortName>
    </alternativeName>
</protein>
<accession>A2CAR9</accession>
<gene>
    <name evidence="1" type="primary">glgB</name>
    <name type="ordered locus">P9303_18371</name>
</gene>
<sequence>MTTSVALDWVVQDGQRLAECRHDHPFSLLGPQSHEGQWIVRIWMPEASQVELLCDGRTTAMTTPNHSWIFEAALNQDPGRTYQLRVKRAGIVHEQHDPWAFHDEWMGEMDRHLFAEGNHHHIWQRMGAHLMEREGVEGVMFCLWAPRACSVAVLGELNGWDGRHHPMQRRQGGLWELFIPGFKEGTLYKYEIRTQDGHCYQKADPYGFQHEVRPATSSVVARLDRYQWQDEQWMRQRDSRNALDQPISVYEMHLGSWIHAATDEPYIELDGTPRAPVLAADMKPGARLLTYPELADQLIPYVKDRGFTHIELMPISEHPFDGSWGYQVTGWYAPTSRFGSPDEFRAFVDRCHAEGLGVIIDWVPGHFPKDGHGLAFFDGTHLYEHSDPRIGEHKEWGTLIFNYSRNEVRNFLVANLVYWFEQFHIDGIRVDAVASMLYRDYLRPDGEWIANEDGGRENTEAVRFLQQANHVLFQHFPGALSIAEESTTWPMVTQPTDMGGLGFNLKWNMGWMHDMLDYFELDPWFRQFHQNNITFSIWYTYTENFMLALSHDEVVHGKSNLLHKMPGDDWQKCANVRALLAYMWTHPGKKTIFMGMEFGQRSEWNVWGDLQWELLTHDPHKGLQKLVDDLNTFYKAEPALWKDDFDQYGFQWIDCNDNRHSIISFMRRESSGGTWLVVVANFTPQSHSNYRIGVPIGGYYEEVFNTDSSCYGGRNLGNMGGKNTDEFNIHGYEQSLELCLPALSVLVFRHDPKRSL</sequence>
<comment type="function">
    <text evidence="1">Catalyzes the formation of the alpha-1,6-glucosidic linkages in glycogen by scission of a 1,4-alpha-linked oligosaccharide from growing alpha-1,4-glucan chains and the subsequent attachment of the oligosaccharide to the alpha-1,6 position.</text>
</comment>
<comment type="catalytic activity">
    <reaction evidence="1">
        <text>Transfers a segment of a (1-&gt;4)-alpha-D-glucan chain to a primary hydroxy group in a similar glucan chain.</text>
        <dbReference type="EC" id="2.4.1.18"/>
    </reaction>
</comment>
<comment type="pathway">
    <text evidence="1">Glycan biosynthesis; glycogen biosynthesis.</text>
</comment>
<comment type="subunit">
    <text evidence="1">Monomer.</text>
</comment>
<comment type="similarity">
    <text evidence="1">Belongs to the glycosyl hydrolase 13 family. GlgB subfamily.</text>
</comment>
<organism>
    <name type="scientific">Prochlorococcus marinus (strain MIT 9303)</name>
    <dbReference type="NCBI Taxonomy" id="59922"/>
    <lineage>
        <taxon>Bacteria</taxon>
        <taxon>Bacillati</taxon>
        <taxon>Cyanobacteriota</taxon>
        <taxon>Cyanophyceae</taxon>
        <taxon>Synechococcales</taxon>
        <taxon>Prochlorococcaceae</taxon>
        <taxon>Prochlorococcus</taxon>
    </lineage>
</organism>
<evidence type="ECO:0000255" key="1">
    <source>
        <dbReference type="HAMAP-Rule" id="MF_00685"/>
    </source>
</evidence>
<reference key="1">
    <citation type="journal article" date="2007" name="PLoS Genet.">
        <title>Patterns and implications of gene gain and loss in the evolution of Prochlorococcus.</title>
        <authorList>
            <person name="Kettler G.C."/>
            <person name="Martiny A.C."/>
            <person name="Huang K."/>
            <person name="Zucker J."/>
            <person name="Coleman M.L."/>
            <person name="Rodrigue S."/>
            <person name="Chen F."/>
            <person name="Lapidus A."/>
            <person name="Ferriera S."/>
            <person name="Johnson J."/>
            <person name="Steglich C."/>
            <person name="Church G.M."/>
            <person name="Richardson P."/>
            <person name="Chisholm S.W."/>
        </authorList>
    </citation>
    <scope>NUCLEOTIDE SEQUENCE [LARGE SCALE GENOMIC DNA]</scope>
    <source>
        <strain>MIT 9303</strain>
    </source>
</reference>
<name>GLGB_PROM3</name>
<keyword id="KW-0119">Carbohydrate metabolism</keyword>
<keyword id="KW-0320">Glycogen biosynthesis</keyword>
<keyword id="KW-0321">Glycogen metabolism</keyword>
<keyword id="KW-0328">Glycosyltransferase</keyword>
<keyword id="KW-0808">Transferase</keyword>
<proteinExistence type="inferred from homology"/>